<name>DNLJ_NEIM0</name>
<protein>
    <recommendedName>
        <fullName evidence="1">DNA ligase</fullName>
        <ecNumber evidence="1">6.5.1.2</ecNumber>
    </recommendedName>
    <alternativeName>
        <fullName evidence="1">Polydeoxyribonucleotide synthase [NAD(+)]</fullName>
    </alternativeName>
</protein>
<feature type="chain" id="PRO_0000340361" description="DNA ligase">
    <location>
        <begin position="1"/>
        <end position="841"/>
    </location>
</feature>
<feature type="domain" description="BRCT" evidence="1">
    <location>
        <begin position="764"/>
        <end position="841"/>
    </location>
</feature>
<feature type="region of interest" description="Disordered" evidence="2">
    <location>
        <begin position="554"/>
        <end position="575"/>
    </location>
</feature>
<feature type="compositionally biased region" description="Polar residues" evidence="2">
    <location>
        <begin position="561"/>
        <end position="570"/>
    </location>
</feature>
<feature type="active site" description="N6-AMP-lysine intermediate" evidence="1">
    <location>
        <position position="145"/>
    </location>
</feature>
<feature type="binding site" evidence="1">
    <location>
        <begin position="54"/>
        <end position="58"/>
    </location>
    <ligand>
        <name>NAD(+)</name>
        <dbReference type="ChEBI" id="CHEBI:57540"/>
    </ligand>
</feature>
<feature type="binding site" evidence="1">
    <location>
        <begin position="103"/>
        <end position="104"/>
    </location>
    <ligand>
        <name>NAD(+)</name>
        <dbReference type="ChEBI" id="CHEBI:57540"/>
    </ligand>
</feature>
<feature type="binding site" evidence="1">
    <location>
        <position position="143"/>
    </location>
    <ligand>
        <name>NAD(+)</name>
        <dbReference type="ChEBI" id="CHEBI:57540"/>
    </ligand>
</feature>
<feature type="binding site" evidence="1">
    <location>
        <position position="166"/>
    </location>
    <ligand>
        <name>NAD(+)</name>
        <dbReference type="ChEBI" id="CHEBI:57540"/>
    </ligand>
</feature>
<feature type="binding site" evidence="1">
    <location>
        <position position="203"/>
    </location>
    <ligand>
        <name>NAD(+)</name>
        <dbReference type="ChEBI" id="CHEBI:57540"/>
    </ligand>
</feature>
<feature type="binding site" evidence="1">
    <location>
        <position position="321"/>
    </location>
    <ligand>
        <name>NAD(+)</name>
        <dbReference type="ChEBI" id="CHEBI:57540"/>
    </ligand>
</feature>
<feature type="binding site" evidence="1">
    <location>
        <position position="345"/>
    </location>
    <ligand>
        <name>NAD(+)</name>
        <dbReference type="ChEBI" id="CHEBI:57540"/>
    </ligand>
</feature>
<feature type="binding site" evidence="1">
    <location>
        <position position="471"/>
    </location>
    <ligand>
        <name>Zn(2+)</name>
        <dbReference type="ChEBI" id="CHEBI:29105"/>
    </ligand>
</feature>
<feature type="binding site" evidence="1">
    <location>
        <position position="474"/>
    </location>
    <ligand>
        <name>Zn(2+)</name>
        <dbReference type="ChEBI" id="CHEBI:29105"/>
    </ligand>
</feature>
<feature type="binding site" evidence="1">
    <location>
        <position position="489"/>
    </location>
    <ligand>
        <name>Zn(2+)</name>
        <dbReference type="ChEBI" id="CHEBI:29105"/>
    </ligand>
</feature>
<feature type="binding site" evidence="1">
    <location>
        <position position="495"/>
    </location>
    <ligand>
        <name>Zn(2+)</name>
        <dbReference type="ChEBI" id="CHEBI:29105"/>
    </ligand>
</feature>
<gene>
    <name evidence="1" type="primary">ligA</name>
    <name type="ordered locus">NMCC_0619</name>
</gene>
<reference key="1">
    <citation type="journal article" date="2008" name="Genomics">
        <title>Characterization of ST-4821 complex, a unique Neisseria meningitidis clone.</title>
        <authorList>
            <person name="Peng J."/>
            <person name="Yang L."/>
            <person name="Yang F."/>
            <person name="Yang J."/>
            <person name="Yan Y."/>
            <person name="Nie H."/>
            <person name="Zhang X."/>
            <person name="Xiong Z."/>
            <person name="Jiang Y."/>
            <person name="Cheng F."/>
            <person name="Xu X."/>
            <person name="Chen S."/>
            <person name="Sun L."/>
            <person name="Li W."/>
            <person name="Shen Y."/>
            <person name="Shao Z."/>
            <person name="Liang X."/>
            <person name="Xu J."/>
            <person name="Jin Q."/>
        </authorList>
    </citation>
    <scope>NUCLEOTIDE SEQUENCE [LARGE SCALE GENOMIC DNA]</scope>
    <source>
        <strain>053442</strain>
    </source>
</reference>
<accession>A9M2U7</accession>
<proteinExistence type="inferred from homology"/>
<evidence type="ECO:0000255" key="1">
    <source>
        <dbReference type="HAMAP-Rule" id="MF_01588"/>
    </source>
</evidence>
<evidence type="ECO:0000256" key="2">
    <source>
        <dbReference type="SAM" id="MobiDB-lite"/>
    </source>
</evidence>
<dbReference type="EC" id="6.5.1.2" evidence="1"/>
<dbReference type="EMBL" id="CP000381">
    <property type="protein sequence ID" value="ABX72816.1"/>
    <property type="molecule type" value="Genomic_DNA"/>
</dbReference>
<dbReference type="RefSeq" id="WP_002214202.1">
    <property type="nucleotide sequence ID" value="NC_010120.1"/>
</dbReference>
<dbReference type="SMR" id="A9M2U7"/>
<dbReference type="KEGG" id="nmn:NMCC_0619"/>
<dbReference type="HOGENOM" id="CLU_007764_2_1_4"/>
<dbReference type="Proteomes" id="UP000001177">
    <property type="component" value="Chromosome"/>
</dbReference>
<dbReference type="GO" id="GO:0005829">
    <property type="term" value="C:cytosol"/>
    <property type="evidence" value="ECO:0007669"/>
    <property type="project" value="TreeGrafter"/>
</dbReference>
<dbReference type="GO" id="GO:0003911">
    <property type="term" value="F:DNA ligase (NAD+) activity"/>
    <property type="evidence" value="ECO:0007669"/>
    <property type="project" value="UniProtKB-UniRule"/>
</dbReference>
<dbReference type="GO" id="GO:0046872">
    <property type="term" value="F:metal ion binding"/>
    <property type="evidence" value="ECO:0007669"/>
    <property type="project" value="UniProtKB-KW"/>
</dbReference>
<dbReference type="GO" id="GO:0006281">
    <property type="term" value="P:DNA repair"/>
    <property type="evidence" value="ECO:0007669"/>
    <property type="project" value="UniProtKB-KW"/>
</dbReference>
<dbReference type="GO" id="GO:0006260">
    <property type="term" value="P:DNA replication"/>
    <property type="evidence" value="ECO:0007669"/>
    <property type="project" value="UniProtKB-KW"/>
</dbReference>
<dbReference type="CDD" id="cd17748">
    <property type="entry name" value="BRCT_DNA_ligase_like"/>
    <property type="match status" value="1"/>
</dbReference>
<dbReference type="CDD" id="cd00114">
    <property type="entry name" value="LIGANc"/>
    <property type="match status" value="1"/>
</dbReference>
<dbReference type="FunFam" id="1.10.150.20:FF:000006">
    <property type="entry name" value="DNA ligase"/>
    <property type="match status" value="1"/>
</dbReference>
<dbReference type="FunFam" id="1.10.287.610:FF:000002">
    <property type="entry name" value="DNA ligase"/>
    <property type="match status" value="1"/>
</dbReference>
<dbReference type="FunFam" id="2.40.50.140:FF:000012">
    <property type="entry name" value="DNA ligase"/>
    <property type="match status" value="1"/>
</dbReference>
<dbReference type="FunFam" id="3.30.470.30:FF:000001">
    <property type="entry name" value="DNA ligase"/>
    <property type="match status" value="1"/>
</dbReference>
<dbReference type="FunFam" id="3.40.50.10190:FF:000045">
    <property type="entry name" value="DNA ligase"/>
    <property type="match status" value="1"/>
</dbReference>
<dbReference type="Gene3D" id="6.20.10.30">
    <property type="match status" value="1"/>
</dbReference>
<dbReference type="Gene3D" id="1.10.150.20">
    <property type="entry name" value="5' to 3' exonuclease, C-terminal subdomain"/>
    <property type="match status" value="2"/>
</dbReference>
<dbReference type="Gene3D" id="3.40.50.10190">
    <property type="entry name" value="BRCT domain"/>
    <property type="match status" value="1"/>
</dbReference>
<dbReference type="Gene3D" id="3.30.470.30">
    <property type="entry name" value="DNA ligase/mRNA capping enzyme"/>
    <property type="match status" value="1"/>
</dbReference>
<dbReference type="Gene3D" id="1.10.287.610">
    <property type="entry name" value="Helix hairpin bin"/>
    <property type="match status" value="1"/>
</dbReference>
<dbReference type="Gene3D" id="2.40.50.140">
    <property type="entry name" value="Nucleic acid-binding proteins"/>
    <property type="match status" value="1"/>
</dbReference>
<dbReference type="HAMAP" id="MF_01588">
    <property type="entry name" value="DNA_ligase_A"/>
    <property type="match status" value="1"/>
</dbReference>
<dbReference type="InterPro" id="IPR001357">
    <property type="entry name" value="BRCT_dom"/>
</dbReference>
<dbReference type="InterPro" id="IPR036420">
    <property type="entry name" value="BRCT_dom_sf"/>
</dbReference>
<dbReference type="InterPro" id="IPR041663">
    <property type="entry name" value="DisA/LigA_HHH"/>
</dbReference>
<dbReference type="InterPro" id="IPR001679">
    <property type="entry name" value="DNA_ligase"/>
</dbReference>
<dbReference type="InterPro" id="IPR018239">
    <property type="entry name" value="DNA_ligase_AS"/>
</dbReference>
<dbReference type="InterPro" id="IPR033136">
    <property type="entry name" value="DNA_ligase_CS"/>
</dbReference>
<dbReference type="InterPro" id="IPR013839">
    <property type="entry name" value="DNAligase_adenylation"/>
</dbReference>
<dbReference type="InterPro" id="IPR013840">
    <property type="entry name" value="DNAligase_N"/>
</dbReference>
<dbReference type="InterPro" id="IPR012340">
    <property type="entry name" value="NA-bd_OB-fold"/>
</dbReference>
<dbReference type="InterPro" id="IPR004150">
    <property type="entry name" value="NAD_DNA_ligase_OB"/>
</dbReference>
<dbReference type="InterPro" id="IPR010994">
    <property type="entry name" value="RuvA_2-like"/>
</dbReference>
<dbReference type="InterPro" id="IPR004149">
    <property type="entry name" value="Znf_DNAligase_C4"/>
</dbReference>
<dbReference type="NCBIfam" id="TIGR00575">
    <property type="entry name" value="dnlj"/>
    <property type="match status" value="1"/>
</dbReference>
<dbReference type="NCBIfam" id="NF005932">
    <property type="entry name" value="PRK07956.1"/>
    <property type="match status" value="1"/>
</dbReference>
<dbReference type="PANTHER" id="PTHR23389">
    <property type="entry name" value="CHROMOSOME TRANSMISSION FIDELITY FACTOR 18"/>
    <property type="match status" value="1"/>
</dbReference>
<dbReference type="PANTHER" id="PTHR23389:SF9">
    <property type="entry name" value="DNA LIGASE"/>
    <property type="match status" value="1"/>
</dbReference>
<dbReference type="Pfam" id="PF00533">
    <property type="entry name" value="BRCT"/>
    <property type="match status" value="1"/>
</dbReference>
<dbReference type="Pfam" id="PF01653">
    <property type="entry name" value="DNA_ligase_aden"/>
    <property type="match status" value="1"/>
</dbReference>
<dbReference type="Pfam" id="PF03120">
    <property type="entry name" value="DNA_ligase_OB"/>
    <property type="match status" value="1"/>
</dbReference>
<dbReference type="Pfam" id="PF03119">
    <property type="entry name" value="DNA_ligase_ZBD"/>
    <property type="match status" value="1"/>
</dbReference>
<dbReference type="Pfam" id="PF12826">
    <property type="entry name" value="HHH_2"/>
    <property type="match status" value="1"/>
</dbReference>
<dbReference type="SMART" id="SM00292">
    <property type="entry name" value="BRCT"/>
    <property type="match status" value="1"/>
</dbReference>
<dbReference type="SMART" id="SM00532">
    <property type="entry name" value="LIGANc"/>
    <property type="match status" value="1"/>
</dbReference>
<dbReference type="SUPFAM" id="SSF52113">
    <property type="entry name" value="BRCT domain"/>
    <property type="match status" value="1"/>
</dbReference>
<dbReference type="SUPFAM" id="SSF56091">
    <property type="entry name" value="DNA ligase/mRNA capping enzyme, catalytic domain"/>
    <property type="match status" value="1"/>
</dbReference>
<dbReference type="SUPFAM" id="SSF50249">
    <property type="entry name" value="Nucleic acid-binding proteins"/>
    <property type="match status" value="1"/>
</dbReference>
<dbReference type="SUPFAM" id="SSF47781">
    <property type="entry name" value="RuvA domain 2-like"/>
    <property type="match status" value="1"/>
</dbReference>
<dbReference type="PROSITE" id="PS50172">
    <property type="entry name" value="BRCT"/>
    <property type="match status" value="1"/>
</dbReference>
<dbReference type="PROSITE" id="PS01055">
    <property type="entry name" value="DNA_LIGASE_N1"/>
    <property type="match status" value="1"/>
</dbReference>
<dbReference type="PROSITE" id="PS01056">
    <property type="entry name" value="DNA_LIGASE_N2"/>
    <property type="match status" value="1"/>
</dbReference>
<organism>
    <name type="scientific">Neisseria meningitidis serogroup C (strain 053442)</name>
    <dbReference type="NCBI Taxonomy" id="374833"/>
    <lineage>
        <taxon>Bacteria</taxon>
        <taxon>Pseudomonadati</taxon>
        <taxon>Pseudomonadota</taxon>
        <taxon>Betaproteobacteria</taxon>
        <taxon>Neisseriales</taxon>
        <taxon>Neisseriaceae</taxon>
        <taxon>Neisseria</taxon>
    </lineage>
</organism>
<keyword id="KW-0227">DNA damage</keyword>
<keyword id="KW-0234">DNA repair</keyword>
<keyword id="KW-0235">DNA replication</keyword>
<keyword id="KW-0436">Ligase</keyword>
<keyword id="KW-0460">Magnesium</keyword>
<keyword id="KW-0464">Manganese</keyword>
<keyword id="KW-0479">Metal-binding</keyword>
<keyword id="KW-0520">NAD</keyword>
<keyword id="KW-0862">Zinc</keyword>
<sequence>MNPNSKHNTNFTNLLKPSDSDIKQFAAQHICRLTDLLNRYAYEYYTLDAPSVPDAEYDKLFRELEALELNHPELKLPDSPTQRVGGEPLAGFAEVRHEVPMLSLTNAFSPQDENGVFDHAEMYAFDQRVRDGLDGGNPEYVIEPKFDGLAISLLYRDGVLVQAATRGDGTTGEDVTQNIKTVSNIPLRLHGENTPELIEVRGEVLMLKADFVALNKRQAENGQKPFANPRNAAAGSLRQLDSRITAQRKLHFFPYSVARQQDGFVAEEHIQELAYFQALGFSLPNGNFGCFKNIDEVLAFYEHMQQKRPELPYEIDGMVVKVNSLAQQHELGFISRAPRWAVAHKFPAEEALTIVEAIDVQIGRTGAVTPVARLQPVFVGGVTVTNATLHNQDEVSRKDVRVGDTVVVRRAGDVIPEVVRVIFERRPMRETAVAVSDGIGHRQDDLFAETPSANQTQSVPLHKPYRLPTHCPICRSEIEREEGEAVARCSGGMLCQAQRAQGLIHFASRKAMDIDGLGEKQIEQLVAQDLVRHFADLYRLDIPTLQKMKETADKTVAESDQMPSEGSSVGASGKHKKQPVKWAENILAGIEASKTPELARFLFALGIRHVGERTAKTLAQAFGTLERVRRAPEPVLACLPDIGTVVARSIAHFFAQAEQQAMIDELLAAGVAPQTQAVTIPPARHAEPQRWIARLPGFKISENKAQALWELAGKNIEGLQTDKALPTDWQAWRSEPQNAALLENLKTFFAQMPSEDEAAQGSDGINKAVAGKTFVLTGTLPTLKRDQAQSLIEAAGGKVSGSVSKKTDYVVAGEAAGSKLEKANALGVSVLSEAELLTLLG</sequence>
<comment type="function">
    <text evidence="1">DNA ligase that catalyzes the formation of phosphodiester linkages between 5'-phosphoryl and 3'-hydroxyl groups in double-stranded DNA using NAD as a coenzyme and as the energy source for the reaction. It is essential for DNA replication and repair of damaged DNA.</text>
</comment>
<comment type="catalytic activity">
    <reaction evidence="1">
        <text>NAD(+) + (deoxyribonucleotide)n-3'-hydroxyl + 5'-phospho-(deoxyribonucleotide)m = (deoxyribonucleotide)n+m + AMP + beta-nicotinamide D-nucleotide.</text>
        <dbReference type="EC" id="6.5.1.2"/>
    </reaction>
</comment>
<comment type="cofactor">
    <cofactor evidence="1">
        <name>Mg(2+)</name>
        <dbReference type="ChEBI" id="CHEBI:18420"/>
    </cofactor>
    <cofactor evidence="1">
        <name>Mn(2+)</name>
        <dbReference type="ChEBI" id="CHEBI:29035"/>
    </cofactor>
</comment>
<comment type="similarity">
    <text evidence="1">Belongs to the NAD-dependent DNA ligase family. LigA subfamily.</text>
</comment>